<evidence type="ECO:0000255" key="1">
    <source>
        <dbReference type="HAMAP-Rule" id="MF_00337"/>
    </source>
</evidence>
<keyword id="KW-0963">Cytoplasm</keyword>
<keyword id="KW-0269">Exonuclease</keyword>
<keyword id="KW-0378">Hydrolase</keyword>
<keyword id="KW-0540">Nuclease</keyword>
<organism>
    <name type="scientific">Yersinia pseudotuberculosis serotype O:1b (strain IP 31758)</name>
    <dbReference type="NCBI Taxonomy" id="349747"/>
    <lineage>
        <taxon>Bacteria</taxon>
        <taxon>Pseudomonadati</taxon>
        <taxon>Pseudomonadota</taxon>
        <taxon>Gammaproteobacteria</taxon>
        <taxon>Enterobacterales</taxon>
        <taxon>Yersiniaceae</taxon>
        <taxon>Yersinia</taxon>
    </lineage>
</organism>
<proteinExistence type="inferred from homology"/>
<gene>
    <name evidence="1" type="primary">xseB</name>
    <name type="ordered locus">YpsIP31758_3110</name>
</gene>
<feature type="chain" id="PRO_1000059726" description="Exodeoxyribonuclease 7 small subunit">
    <location>
        <begin position="1"/>
        <end position="84"/>
    </location>
</feature>
<reference key="1">
    <citation type="journal article" date="2007" name="PLoS Genet.">
        <title>The complete genome sequence of Yersinia pseudotuberculosis IP31758, the causative agent of Far East scarlet-like fever.</title>
        <authorList>
            <person name="Eppinger M."/>
            <person name="Rosovitz M.J."/>
            <person name="Fricke W.F."/>
            <person name="Rasko D.A."/>
            <person name="Kokorina G."/>
            <person name="Fayolle C."/>
            <person name="Lindler L.E."/>
            <person name="Carniel E."/>
            <person name="Ravel J."/>
        </authorList>
    </citation>
    <scope>NUCLEOTIDE SEQUENCE [LARGE SCALE GENOMIC DNA]</scope>
    <source>
        <strain>IP 31758</strain>
    </source>
</reference>
<name>EX7S_YERP3</name>
<dbReference type="EC" id="3.1.11.6" evidence="1"/>
<dbReference type="EMBL" id="CP000720">
    <property type="protein sequence ID" value="ABS48148.1"/>
    <property type="molecule type" value="Genomic_DNA"/>
</dbReference>
<dbReference type="RefSeq" id="WP_002208660.1">
    <property type="nucleotide sequence ID" value="NC_009708.1"/>
</dbReference>
<dbReference type="SMR" id="A7FLE2"/>
<dbReference type="GeneID" id="57975538"/>
<dbReference type="KEGG" id="ypi:YpsIP31758_3110"/>
<dbReference type="HOGENOM" id="CLU_145918_3_3_6"/>
<dbReference type="Proteomes" id="UP000002412">
    <property type="component" value="Chromosome"/>
</dbReference>
<dbReference type="GO" id="GO:0005829">
    <property type="term" value="C:cytosol"/>
    <property type="evidence" value="ECO:0007669"/>
    <property type="project" value="TreeGrafter"/>
</dbReference>
<dbReference type="GO" id="GO:0009318">
    <property type="term" value="C:exodeoxyribonuclease VII complex"/>
    <property type="evidence" value="ECO:0007669"/>
    <property type="project" value="InterPro"/>
</dbReference>
<dbReference type="GO" id="GO:0008855">
    <property type="term" value="F:exodeoxyribonuclease VII activity"/>
    <property type="evidence" value="ECO:0007669"/>
    <property type="project" value="UniProtKB-UniRule"/>
</dbReference>
<dbReference type="GO" id="GO:0006308">
    <property type="term" value="P:DNA catabolic process"/>
    <property type="evidence" value="ECO:0007669"/>
    <property type="project" value="UniProtKB-UniRule"/>
</dbReference>
<dbReference type="FunFam" id="1.10.287.1040:FF:000001">
    <property type="entry name" value="Exodeoxyribonuclease 7 small subunit"/>
    <property type="match status" value="1"/>
</dbReference>
<dbReference type="Gene3D" id="1.10.287.1040">
    <property type="entry name" value="Exonuclease VII, small subunit"/>
    <property type="match status" value="1"/>
</dbReference>
<dbReference type="HAMAP" id="MF_00337">
    <property type="entry name" value="Exonuc_7_S"/>
    <property type="match status" value="1"/>
</dbReference>
<dbReference type="InterPro" id="IPR003761">
    <property type="entry name" value="Exonuc_VII_S"/>
</dbReference>
<dbReference type="InterPro" id="IPR037004">
    <property type="entry name" value="Exonuc_VII_ssu_sf"/>
</dbReference>
<dbReference type="NCBIfam" id="NF002137">
    <property type="entry name" value="PRK00977.1-1"/>
    <property type="match status" value="1"/>
</dbReference>
<dbReference type="NCBIfam" id="NF002140">
    <property type="entry name" value="PRK00977.1-4"/>
    <property type="match status" value="1"/>
</dbReference>
<dbReference type="NCBIfam" id="TIGR01280">
    <property type="entry name" value="xseB"/>
    <property type="match status" value="1"/>
</dbReference>
<dbReference type="PANTHER" id="PTHR34137">
    <property type="entry name" value="EXODEOXYRIBONUCLEASE 7 SMALL SUBUNIT"/>
    <property type="match status" value="1"/>
</dbReference>
<dbReference type="PANTHER" id="PTHR34137:SF1">
    <property type="entry name" value="EXODEOXYRIBONUCLEASE 7 SMALL SUBUNIT"/>
    <property type="match status" value="1"/>
</dbReference>
<dbReference type="Pfam" id="PF02609">
    <property type="entry name" value="Exonuc_VII_S"/>
    <property type="match status" value="1"/>
</dbReference>
<dbReference type="PIRSF" id="PIRSF006488">
    <property type="entry name" value="Exonuc_VII_S"/>
    <property type="match status" value="1"/>
</dbReference>
<dbReference type="SUPFAM" id="SSF116842">
    <property type="entry name" value="XseB-like"/>
    <property type="match status" value="1"/>
</dbReference>
<accession>A7FLE2</accession>
<protein>
    <recommendedName>
        <fullName evidence="1">Exodeoxyribonuclease 7 small subunit</fullName>
        <ecNumber evidence="1">3.1.11.6</ecNumber>
    </recommendedName>
    <alternativeName>
        <fullName evidence="1">Exodeoxyribonuclease VII small subunit</fullName>
        <shortName evidence="1">Exonuclease VII small subunit</shortName>
    </alternativeName>
</protein>
<comment type="function">
    <text evidence="1">Bidirectionally degrades single-stranded DNA into large acid-insoluble oligonucleotides, which are then degraded further into small acid-soluble oligonucleotides.</text>
</comment>
<comment type="catalytic activity">
    <reaction evidence="1">
        <text>Exonucleolytic cleavage in either 5'- to 3'- or 3'- to 5'-direction to yield nucleoside 5'-phosphates.</text>
        <dbReference type="EC" id="3.1.11.6"/>
    </reaction>
</comment>
<comment type="subunit">
    <text evidence="1">Heterooligomer composed of large and small subunits.</text>
</comment>
<comment type="subcellular location">
    <subcellularLocation>
        <location evidence="1">Cytoplasm</location>
    </subcellularLocation>
</comment>
<comment type="similarity">
    <text evidence="1">Belongs to the XseB family.</text>
</comment>
<sequence length="84" mass="9307">MPKKAASPEIKAASFETSLSELEQIVTRLESGELPLEDALNEFERGVQLARQGQQTLLQAEQRVQILLSDDVDAPLKPFTPDTE</sequence>